<protein>
    <recommendedName>
        <fullName evidence="1">Transcriptional repressor NrdR</fullName>
    </recommendedName>
</protein>
<reference key="1">
    <citation type="book" date="2006" name="Gram positive pathogens, 2nd edition">
        <title>The Staphylococcus aureus NCTC 8325 genome.</title>
        <editorList>
            <person name="Fischetti V."/>
            <person name="Novick R."/>
            <person name="Ferretti J."/>
            <person name="Portnoy D."/>
            <person name="Rood J."/>
        </editorList>
        <authorList>
            <person name="Gillaspy A.F."/>
            <person name="Worrell V."/>
            <person name="Orvis J."/>
            <person name="Roe B.A."/>
            <person name="Dyer D.W."/>
            <person name="Iandolo J.J."/>
        </authorList>
    </citation>
    <scope>NUCLEOTIDE SEQUENCE [LARGE SCALE GENOMIC DNA]</scope>
    <source>
        <strain>NCTC 8325 / PS 47</strain>
    </source>
</reference>
<gene>
    <name evidence="1" type="primary">nrdR</name>
    <name type="ordered locus">SAOUHSC_01793</name>
</gene>
<sequence length="156" mass="18204">MKCPKCNSTQSKVVDSRHADELNAIRRRRECENCGTRFTTFEHIEVSQLIVVKKDGTREQFSREKILNGLVRSCEKRPVRYQQLEDITNKVEWQLRDEGHTEVSSRDIGEHVMNLLMHVDQVSYVRFASVYKEFKDVDQLLASMQGILSENKRSDA</sequence>
<proteinExistence type="inferred from homology"/>
<feature type="chain" id="PRO_0000264215" description="Transcriptional repressor NrdR">
    <location>
        <begin position="1"/>
        <end position="156"/>
    </location>
</feature>
<feature type="domain" description="ATP-cone" evidence="1">
    <location>
        <begin position="49"/>
        <end position="139"/>
    </location>
</feature>
<feature type="zinc finger region" evidence="1">
    <location>
        <begin position="3"/>
        <end position="34"/>
    </location>
</feature>
<keyword id="KW-0067">ATP-binding</keyword>
<keyword id="KW-0238">DNA-binding</keyword>
<keyword id="KW-0479">Metal-binding</keyword>
<keyword id="KW-0547">Nucleotide-binding</keyword>
<keyword id="KW-1185">Reference proteome</keyword>
<keyword id="KW-0678">Repressor</keyword>
<keyword id="KW-0804">Transcription</keyword>
<keyword id="KW-0805">Transcription regulation</keyword>
<keyword id="KW-0862">Zinc</keyword>
<keyword id="KW-0863">Zinc-finger</keyword>
<organism>
    <name type="scientific">Staphylococcus aureus (strain NCTC 8325 / PS 47)</name>
    <dbReference type="NCBI Taxonomy" id="93061"/>
    <lineage>
        <taxon>Bacteria</taxon>
        <taxon>Bacillati</taxon>
        <taxon>Bacillota</taxon>
        <taxon>Bacilli</taxon>
        <taxon>Bacillales</taxon>
        <taxon>Staphylococcaceae</taxon>
        <taxon>Staphylococcus</taxon>
    </lineage>
</organism>
<dbReference type="EMBL" id="CP000253">
    <property type="protein sequence ID" value="ABD30861.1"/>
    <property type="molecule type" value="Genomic_DNA"/>
</dbReference>
<dbReference type="RefSeq" id="WP_000650082.1">
    <property type="nucleotide sequence ID" value="NZ_LS483365.1"/>
</dbReference>
<dbReference type="RefSeq" id="YP_500297.1">
    <property type="nucleotide sequence ID" value="NC_007795.1"/>
</dbReference>
<dbReference type="SMR" id="Q2FXP3"/>
<dbReference type="STRING" id="93061.SAOUHSC_01793"/>
<dbReference type="PaxDb" id="1280-SAXN108_1712"/>
<dbReference type="GeneID" id="3920434"/>
<dbReference type="GeneID" id="66839865"/>
<dbReference type="KEGG" id="sao:SAOUHSC_01793"/>
<dbReference type="eggNOG" id="COG1327">
    <property type="taxonomic scope" value="Bacteria"/>
</dbReference>
<dbReference type="HOGENOM" id="CLU_108412_0_0_9"/>
<dbReference type="OrthoDB" id="9807461at2"/>
<dbReference type="PRO" id="PR:Q2FXP3"/>
<dbReference type="Proteomes" id="UP000008816">
    <property type="component" value="Chromosome"/>
</dbReference>
<dbReference type="GO" id="GO:0005524">
    <property type="term" value="F:ATP binding"/>
    <property type="evidence" value="ECO:0007669"/>
    <property type="project" value="UniProtKB-KW"/>
</dbReference>
<dbReference type="GO" id="GO:0003690">
    <property type="term" value="F:double-stranded DNA binding"/>
    <property type="evidence" value="ECO:0000318"/>
    <property type="project" value="GO_Central"/>
</dbReference>
<dbReference type="GO" id="GO:0008270">
    <property type="term" value="F:zinc ion binding"/>
    <property type="evidence" value="ECO:0007669"/>
    <property type="project" value="UniProtKB-UniRule"/>
</dbReference>
<dbReference type="GO" id="GO:0045892">
    <property type="term" value="P:negative regulation of DNA-templated transcription"/>
    <property type="evidence" value="ECO:0000318"/>
    <property type="project" value="GO_Central"/>
</dbReference>
<dbReference type="HAMAP" id="MF_00440">
    <property type="entry name" value="NrdR"/>
    <property type="match status" value="1"/>
</dbReference>
<dbReference type="InterPro" id="IPR005144">
    <property type="entry name" value="ATP-cone_dom"/>
</dbReference>
<dbReference type="InterPro" id="IPR055173">
    <property type="entry name" value="NrdR-like_N"/>
</dbReference>
<dbReference type="InterPro" id="IPR003796">
    <property type="entry name" value="RNR_NrdR-like"/>
</dbReference>
<dbReference type="NCBIfam" id="TIGR00244">
    <property type="entry name" value="transcriptional regulator NrdR"/>
    <property type="match status" value="1"/>
</dbReference>
<dbReference type="PANTHER" id="PTHR30455">
    <property type="entry name" value="TRANSCRIPTIONAL REPRESSOR NRDR"/>
    <property type="match status" value="1"/>
</dbReference>
<dbReference type="PANTHER" id="PTHR30455:SF2">
    <property type="entry name" value="TRANSCRIPTIONAL REPRESSOR NRDR"/>
    <property type="match status" value="1"/>
</dbReference>
<dbReference type="Pfam" id="PF03477">
    <property type="entry name" value="ATP-cone"/>
    <property type="match status" value="1"/>
</dbReference>
<dbReference type="Pfam" id="PF22811">
    <property type="entry name" value="Zn_ribbon_NrdR"/>
    <property type="match status" value="1"/>
</dbReference>
<dbReference type="PROSITE" id="PS51161">
    <property type="entry name" value="ATP_CONE"/>
    <property type="match status" value="1"/>
</dbReference>
<evidence type="ECO:0000255" key="1">
    <source>
        <dbReference type="HAMAP-Rule" id="MF_00440"/>
    </source>
</evidence>
<name>NRDR_STAA8</name>
<comment type="function">
    <text evidence="1">Negatively regulates transcription of bacterial ribonucleotide reductase nrd genes and operons by binding to NrdR-boxes.</text>
</comment>
<comment type="cofactor">
    <cofactor evidence="1">
        <name>Zn(2+)</name>
        <dbReference type="ChEBI" id="CHEBI:29105"/>
    </cofactor>
    <text evidence="1">Binds 1 zinc ion.</text>
</comment>
<comment type="similarity">
    <text evidence="1">Belongs to the NrdR family.</text>
</comment>
<accession>Q2FXP3</accession>